<feature type="chain" id="PRO_0000218085" description="Trans-aconitate 2-methyltransferase">
    <location>
        <begin position="1"/>
        <end position="256"/>
    </location>
</feature>
<comment type="function">
    <text evidence="1">Catalyzes the S-adenosylmethionine monomethyl esterification of trans-aconitate.</text>
</comment>
<comment type="catalytic activity">
    <reaction evidence="1">
        <text>trans-aconitate + S-adenosyl-L-methionine = (E)-3-(methoxycarbonyl)pent-2-enedioate + S-adenosyl-L-homocysteine</text>
        <dbReference type="Rhea" id="RHEA:14969"/>
        <dbReference type="ChEBI" id="CHEBI:15708"/>
        <dbReference type="ChEBI" id="CHEBI:57470"/>
        <dbReference type="ChEBI" id="CHEBI:57856"/>
        <dbReference type="ChEBI" id="CHEBI:59789"/>
        <dbReference type="EC" id="2.1.1.144"/>
    </reaction>
</comment>
<comment type="subcellular location">
    <subcellularLocation>
        <location evidence="1">Cytoplasm</location>
    </subcellularLocation>
</comment>
<comment type="similarity">
    <text evidence="1">Belongs to the methyltransferase superfamily. Tam family.</text>
</comment>
<evidence type="ECO:0000255" key="1">
    <source>
        <dbReference type="HAMAP-Rule" id="MF_00560"/>
    </source>
</evidence>
<gene>
    <name evidence="1" type="primary">tam</name>
    <name type="ordered locus">mll1606</name>
</gene>
<dbReference type="EC" id="2.1.1.144" evidence="1"/>
<dbReference type="EMBL" id="BA000012">
    <property type="protein sequence ID" value="BAB48941.1"/>
    <property type="molecule type" value="Genomic_DNA"/>
</dbReference>
<dbReference type="RefSeq" id="WP_010910294.1">
    <property type="nucleotide sequence ID" value="NC_002678.2"/>
</dbReference>
<dbReference type="SMR" id="Q98K73"/>
<dbReference type="KEGG" id="mlo:mll1606"/>
<dbReference type="PATRIC" id="fig|266835.9.peg.1296"/>
<dbReference type="eggNOG" id="COG4106">
    <property type="taxonomic scope" value="Bacteria"/>
</dbReference>
<dbReference type="HOGENOM" id="CLU_037990_5_2_5"/>
<dbReference type="Proteomes" id="UP000000552">
    <property type="component" value="Chromosome"/>
</dbReference>
<dbReference type="GO" id="GO:0005737">
    <property type="term" value="C:cytoplasm"/>
    <property type="evidence" value="ECO:0007669"/>
    <property type="project" value="UniProtKB-SubCell"/>
</dbReference>
<dbReference type="GO" id="GO:0030798">
    <property type="term" value="F:trans-aconitate 2-methyltransferase activity"/>
    <property type="evidence" value="ECO:0007669"/>
    <property type="project" value="UniProtKB-UniRule"/>
</dbReference>
<dbReference type="GO" id="GO:0032259">
    <property type="term" value="P:methylation"/>
    <property type="evidence" value="ECO:0007669"/>
    <property type="project" value="UniProtKB-KW"/>
</dbReference>
<dbReference type="CDD" id="cd02440">
    <property type="entry name" value="AdoMet_MTases"/>
    <property type="match status" value="1"/>
</dbReference>
<dbReference type="Gene3D" id="1.10.150.290">
    <property type="entry name" value="S-adenosyl-L-methionine-dependent methyltransferases"/>
    <property type="match status" value="1"/>
</dbReference>
<dbReference type="Gene3D" id="3.40.50.150">
    <property type="entry name" value="Vaccinia Virus protein VP39"/>
    <property type="match status" value="1"/>
</dbReference>
<dbReference type="HAMAP" id="MF_00560">
    <property type="entry name" value="Tran_acon_Me_trans"/>
    <property type="match status" value="1"/>
</dbReference>
<dbReference type="InterPro" id="IPR029063">
    <property type="entry name" value="SAM-dependent_MTases_sf"/>
</dbReference>
<dbReference type="InterPro" id="IPR023506">
    <property type="entry name" value="Trans-aconitate_MeTrfase"/>
</dbReference>
<dbReference type="InterPro" id="IPR023149">
    <property type="entry name" value="Trans_acon_MeTrfase_C"/>
</dbReference>
<dbReference type="NCBIfam" id="NF002463">
    <property type="entry name" value="PRK01683.1"/>
    <property type="match status" value="1"/>
</dbReference>
<dbReference type="PANTHER" id="PTHR43861:SF1">
    <property type="entry name" value="TRANS-ACONITATE 2-METHYLTRANSFERASE"/>
    <property type="match status" value="1"/>
</dbReference>
<dbReference type="PANTHER" id="PTHR43861">
    <property type="entry name" value="TRANS-ACONITATE 2-METHYLTRANSFERASE-RELATED"/>
    <property type="match status" value="1"/>
</dbReference>
<dbReference type="Pfam" id="PF13489">
    <property type="entry name" value="Methyltransf_23"/>
    <property type="match status" value="1"/>
</dbReference>
<dbReference type="SUPFAM" id="SSF53335">
    <property type="entry name" value="S-adenosyl-L-methionine-dependent methyltransferases"/>
    <property type="match status" value="1"/>
</dbReference>
<name>TAM_RHILO</name>
<keyword id="KW-0963">Cytoplasm</keyword>
<keyword id="KW-0489">Methyltransferase</keyword>
<keyword id="KW-0949">S-adenosyl-L-methionine</keyword>
<keyword id="KW-0808">Transferase</keyword>
<proteinExistence type="inferred from homology"/>
<organism>
    <name type="scientific">Mesorhizobium japonicum (strain LMG 29417 / CECT 9101 / MAFF 303099)</name>
    <name type="common">Mesorhizobium loti (strain MAFF 303099)</name>
    <dbReference type="NCBI Taxonomy" id="266835"/>
    <lineage>
        <taxon>Bacteria</taxon>
        <taxon>Pseudomonadati</taxon>
        <taxon>Pseudomonadota</taxon>
        <taxon>Alphaproteobacteria</taxon>
        <taxon>Hyphomicrobiales</taxon>
        <taxon>Phyllobacteriaceae</taxon>
        <taxon>Mesorhizobium</taxon>
    </lineage>
</organism>
<reference key="1">
    <citation type="journal article" date="2000" name="DNA Res.">
        <title>Complete genome structure of the nitrogen-fixing symbiotic bacterium Mesorhizobium loti.</title>
        <authorList>
            <person name="Kaneko T."/>
            <person name="Nakamura Y."/>
            <person name="Sato S."/>
            <person name="Asamizu E."/>
            <person name="Kato T."/>
            <person name="Sasamoto S."/>
            <person name="Watanabe A."/>
            <person name="Idesawa K."/>
            <person name="Ishikawa A."/>
            <person name="Kawashima K."/>
            <person name="Kimura T."/>
            <person name="Kishida Y."/>
            <person name="Kiyokawa C."/>
            <person name="Kohara M."/>
            <person name="Matsumoto M."/>
            <person name="Matsuno A."/>
            <person name="Mochizuki Y."/>
            <person name="Nakayama S."/>
            <person name="Nakazaki N."/>
            <person name="Shimpo S."/>
            <person name="Sugimoto M."/>
            <person name="Takeuchi C."/>
            <person name="Yamada M."/>
            <person name="Tabata S."/>
        </authorList>
    </citation>
    <scope>NUCLEOTIDE SEQUENCE [LARGE SCALE GENOMIC DNA]</scope>
    <source>
        <strain>LMG 29417 / CECT 9101 / MAFF 303099</strain>
    </source>
</reference>
<accession>Q98K73</accession>
<sequence>MADWSAAQYLKFEDERTRPARDLVAQVPVDFPRRVVDIGCGPGNSTELLVQRWPDAQVSGFDTSPDMIEKARVRLPNVSFDLADASTWQPAEPVNVIFANAVFQWLPTHPAVFQRLMGFLAPGGALAVQMPDNLLEPSHQMMRDTAAEMPFADKLKGAARGPLPPVSFYYDLMSPLADRLDIWHTAYNHPLADAEAIVEWVKSTGLKPFLDPLDADERKMFLDSYTAKIAKAYPKTADGKVLLRFPRIFIVAKRAG</sequence>
<protein>
    <recommendedName>
        <fullName evidence="1">Trans-aconitate 2-methyltransferase</fullName>
        <ecNumber evidence="1">2.1.1.144</ecNumber>
    </recommendedName>
</protein>